<dbReference type="EC" id="3.1.1.22" evidence="1"/>
<dbReference type="EMBL" id="CP000440">
    <property type="protein sequence ID" value="ABI86278.1"/>
    <property type="molecule type" value="Genomic_DNA"/>
</dbReference>
<dbReference type="RefSeq" id="WP_011656103.1">
    <property type="nucleotide sequence ID" value="NC_008390.1"/>
</dbReference>
<dbReference type="GeneID" id="93083870"/>
<dbReference type="KEGG" id="bam:Bamb_0719"/>
<dbReference type="PATRIC" id="fig|339670.21.peg.875"/>
<dbReference type="eggNOG" id="ENOG502Z8QU">
    <property type="taxonomic scope" value="Bacteria"/>
</dbReference>
<dbReference type="UniPathway" id="UPA00863"/>
<dbReference type="Proteomes" id="UP000000662">
    <property type="component" value="Chromosome 1"/>
</dbReference>
<dbReference type="GO" id="GO:0005615">
    <property type="term" value="C:extracellular space"/>
    <property type="evidence" value="ECO:0007669"/>
    <property type="project" value="InterPro"/>
</dbReference>
<dbReference type="GO" id="GO:0047989">
    <property type="term" value="F:hydroxybutyrate-dimer hydrolase activity"/>
    <property type="evidence" value="ECO:0007669"/>
    <property type="project" value="UniProtKB-UniRule"/>
</dbReference>
<dbReference type="GO" id="GO:0019605">
    <property type="term" value="P:butyrate metabolic process"/>
    <property type="evidence" value="ECO:0007669"/>
    <property type="project" value="UniProtKB-UniRule"/>
</dbReference>
<dbReference type="HAMAP" id="MF_01906">
    <property type="entry name" value="3HBOH"/>
    <property type="match status" value="1"/>
</dbReference>
<dbReference type="InterPro" id="IPR016582">
    <property type="entry name" value="OHBut_olig_hydro_put"/>
</dbReference>
<dbReference type="Pfam" id="PF10605">
    <property type="entry name" value="3HBOH"/>
    <property type="match status" value="1"/>
</dbReference>
<dbReference type="PIRSF" id="PIRSF011409">
    <property type="entry name" value="HObutyrate_olig_hydrol"/>
    <property type="match status" value="1"/>
</dbReference>
<protein>
    <recommendedName>
        <fullName evidence="1">D-(-)-3-hydroxybutyrate oligomer hydrolase</fullName>
        <shortName evidence="1">3HB-oligomer hydrolase</shortName>
        <shortName evidence="1">3HBOH</shortName>
        <ecNumber evidence="1">3.1.1.22</ecNumber>
    </recommendedName>
</protein>
<accession>Q0BHU5</accession>
<feature type="signal peptide" evidence="1">
    <location>
        <begin position="1"/>
        <end position="17"/>
    </location>
</feature>
<feature type="chain" id="PRO_0000314414" description="D-(-)-3-hydroxybutyrate oligomer hydrolase">
    <location>
        <begin position="18"/>
        <end position="695"/>
    </location>
</feature>
<feature type="active site" description="Charge relay system" evidence="1">
    <location>
        <position position="308"/>
    </location>
</feature>
<keyword id="KW-0378">Hydrolase</keyword>
<keyword id="KW-0964">Secreted</keyword>
<keyword id="KW-0732">Signal</keyword>
<gene>
    <name type="ordered locus">Bamb_0719</name>
</gene>
<reference key="1">
    <citation type="submission" date="2006-08" db="EMBL/GenBank/DDBJ databases">
        <title>Complete sequence of chromosome 1 of Burkholderia cepacia AMMD.</title>
        <authorList>
            <person name="Copeland A."/>
            <person name="Lucas S."/>
            <person name="Lapidus A."/>
            <person name="Barry K."/>
            <person name="Detter J.C."/>
            <person name="Glavina del Rio T."/>
            <person name="Hammon N."/>
            <person name="Israni S."/>
            <person name="Pitluck S."/>
            <person name="Bruce D."/>
            <person name="Chain P."/>
            <person name="Malfatti S."/>
            <person name="Shin M."/>
            <person name="Vergez L."/>
            <person name="Schmutz J."/>
            <person name="Larimer F."/>
            <person name="Land M."/>
            <person name="Hauser L."/>
            <person name="Kyrpides N."/>
            <person name="Kim E."/>
            <person name="Parke J."/>
            <person name="Coenye T."/>
            <person name="Konstantinidis K."/>
            <person name="Ramette A."/>
            <person name="Tiedje J."/>
            <person name="Richardson P."/>
        </authorList>
    </citation>
    <scope>NUCLEOTIDE SEQUENCE [LARGE SCALE GENOMIC DNA]</scope>
    <source>
        <strain>ATCC BAA-244 / DSM 16087 / CCUG 44356 / LMG 19182 / AMMD</strain>
    </source>
</reference>
<sequence length="695" mass="71704">MTTHGWGTRILLGAALAALTLLGGCNDADSGERNRLPGFVSGSVRTTAYDGTSDDLLTAGLGKTGLASTAPAFANPSRPTSAELRRLAIWSNYRALVDMSANGGYGRFWGPNVDLDGNATLGEGKIPGTEYLAYSDDGSGRKNVTLLVQVPASFDPKQPCIVTATSSGSRGVYGAISAAGEWGLKRGCAVAYNDKGGGNGAHELGSDTITLIDGTLANAVLAGNASLFTANVTSGDLAAFNGRFPNRYAFKHAHSQQNPEQDWGHATLQAVEFAYWALNEQFGPVLDSSHHGVRYHPGDITTIAASVSNGGGAALAAAEQDTRRWITAVVVGEPQVNVRMSPNAIVREGGQPAPSFGRPLADYATLANLLQPCAAASASLAGEPYLSGLPAATTQSIRTQRCATLAAAGLVSGADTQSQAADALAQLHAAGYLADSDLLQASMWDSQAIPAIAVTYANAYTRSRVTDNLCNFSFATTSAPTGTVASPAASPMPAIFGVGNGVPPTGGIDLVFNTGAGVDHRLATPDASFAGALCLRQLWTNGMLDMPANVDAVRVNANLQGKPAIIVQGRSDALVPVNHASRAYVAQNSISEGARSQLVFYEVTNGQHFDAFLPVAGFDTRFVPVHYYNVQALNLMWRHLKNGAALPPSQVIRTVPRGGTPGAAPALTSANLPPIATSPGANAITAGAGAIDVPL</sequence>
<name>HBOH_BURCM</name>
<evidence type="ECO:0000255" key="1">
    <source>
        <dbReference type="HAMAP-Rule" id="MF_01906"/>
    </source>
</evidence>
<proteinExistence type="inferred from homology"/>
<comment type="function">
    <text evidence="1">Participates in the degradation of poly-3-hydroxybutyrate (PHB). It works downstream of poly(3-hydroxybutyrate) depolymerase, hydrolyzing D(-)-3-hydroxybutyrate oligomers of various length (3HB-oligomers) into 3HB-monomers.</text>
</comment>
<comment type="catalytic activity">
    <reaction evidence="1">
        <text>(3R)-hydroxybutanoate dimer + H2O = 2 (R)-3-hydroxybutanoate + H(+)</text>
        <dbReference type="Rhea" id="RHEA:10172"/>
        <dbReference type="ChEBI" id="CHEBI:10979"/>
        <dbReference type="ChEBI" id="CHEBI:10983"/>
        <dbReference type="ChEBI" id="CHEBI:15377"/>
        <dbReference type="ChEBI" id="CHEBI:15378"/>
        <dbReference type="EC" id="3.1.1.22"/>
    </reaction>
</comment>
<comment type="pathway">
    <text evidence="1">Lipid metabolism; butanoate metabolism.</text>
</comment>
<comment type="subcellular location">
    <subcellularLocation>
        <location evidence="1">Secreted</location>
    </subcellularLocation>
</comment>
<comment type="similarity">
    <text evidence="1">Belongs to the D-(-)-3-hydroxybutyrate oligomer hydrolase family.</text>
</comment>
<organism>
    <name type="scientific">Burkholderia ambifaria (strain ATCC BAA-244 / DSM 16087 / CCUG 44356 / LMG 19182 / AMMD)</name>
    <name type="common">Burkholderia cepacia (strain AMMD)</name>
    <dbReference type="NCBI Taxonomy" id="339670"/>
    <lineage>
        <taxon>Bacteria</taxon>
        <taxon>Pseudomonadati</taxon>
        <taxon>Pseudomonadota</taxon>
        <taxon>Betaproteobacteria</taxon>
        <taxon>Burkholderiales</taxon>
        <taxon>Burkholderiaceae</taxon>
        <taxon>Burkholderia</taxon>
        <taxon>Burkholderia cepacia complex</taxon>
    </lineage>
</organism>